<keyword id="KW-0030">Aminoacyl-tRNA synthetase</keyword>
<keyword id="KW-0067">ATP-binding</keyword>
<keyword id="KW-0963">Cytoplasm</keyword>
<keyword id="KW-0436">Ligase</keyword>
<keyword id="KW-0547">Nucleotide-binding</keyword>
<keyword id="KW-0648">Protein biosynthesis</keyword>
<evidence type="ECO:0000255" key="1">
    <source>
        <dbReference type="HAMAP-Rule" id="MF_00049"/>
    </source>
</evidence>
<comment type="catalytic activity">
    <reaction evidence="1">
        <text>tRNA(Leu) + L-leucine + ATP = L-leucyl-tRNA(Leu) + AMP + diphosphate</text>
        <dbReference type="Rhea" id="RHEA:11688"/>
        <dbReference type="Rhea" id="RHEA-COMP:9613"/>
        <dbReference type="Rhea" id="RHEA-COMP:9622"/>
        <dbReference type="ChEBI" id="CHEBI:30616"/>
        <dbReference type="ChEBI" id="CHEBI:33019"/>
        <dbReference type="ChEBI" id="CHEBI:57427"/>
        <dbReference type="ChEBI" id="CHEBI:78442"/>
        <dbReference type="ChEBI" id="CHEBI:78494"/>
        <dbReference type="ChEBI" id="CHEBI:456215"/>
        <dbReference type="EC" id="6.1.1.4"/>
    </reaction>
</comment>
<comment type="subcellular location">
    <subcellularLocation>
        <location evidence="1">Cytoplasm</location>
    </subcellularLocation>
</comment>
<comment type="similarity">
    <text evidence="1">Belongs to the class-I aminoacyl-tRNA synthetase family.</text>
</comment>
<name>SYL_CAMC1</name>
<organism>
    <name type="scientific">Campylobacter concisus (strain 13826)</name>
    <dbReference type="NCBI Taxonomy" id="360104"/>
    <lineage>
        <taxon>Bacteria</taxon>
        <taxon>Pseudomonadati</taxon>
        <taxon>Campylobacterota</taxon>
        <taxon>Epsilonproteobacteria</taxon>
        <taxon>Campylobacterales</taxon>
        <taxon>Campylobacteraceae</taxon>
        <taxon>Campylobacter</taxon>
    </lineage>
</organism>
<feature type="chain" id="PRO_0000334738" description="Leucine--tRNA ligase">
    <location>
        <begin position="1"/>
        <end position="821"/>
    </location>
</feature>
<feature type="short sequence motif" description="'HIGH' region">
    <location>
        <begin position="44"/>
        <end position="54"/>
    </location>
</feature>
<feature type="short sequence motif" description="'KMSKS' region">
    <location>
        <begin position="589"/>
        <end position="593"/>
    </location>
</feature>
<feature type="binding site" evidence="1">
    <location>
        <position position="592"/>
    </location>
    <ligand>
        <name>ATP</name>
        <dbReference type="ChEBI" id="CHEBI:30616"/>
    </ligand>
</feature>
<proteinExistence type="inferred from homology"/>
<dbReference type="EC" id="6.1.1.4" evidence="1"/>
<dbReference type="EMBL" id="CP000792">
    <property type="protein sequence ID" value="EAT97782.1"/>
    <property type="molecule type" value="Genomic_DNA"/>
</dbReference>
<dbReference type="RefSeq" id="WP_012139968.1">
    <property type="nucleotide sequence ID" value="NC_009802.2"/>
</dbReference>
<dbReference type="SMR" id="A7ZE39"/>
<dbReference type="STRING" id="360104.CCC13826_0074"/>
<dbReference type="KEGG" id="cco:CCC13826_0074"/>
<dbReference type="eggNOG" id="COG0495">
    <property type="taxonomic scope" value="Bacteria"/>
</dbReference>
<dbReference type="HOGENOM" id="CLU_004427_0_0_7"/>
<dbReference type="OrthoDB" id="9810365at2"/>
<dbReference type="Proteomes" id="UP000001121">
    <property type="component" value="Chromosome"/>
</dbReference>
<dbReference type="GO" id="GO:0005829">
    <property type="term" value="C:cytosol"/>
    <property type="evidence" value="ECO:0007669"/>
    <property type="project" value="TreeGrafter"/>
</dbReference>
<dbReference type="GO" id="GO:0002161">
    <property type="term" value="F:aminoacyl-tRNA deacylase activity"/>
    <property type="evidence" value="ECO:0007669"/>
    <property type="project" value="InterPro"/>
</dbReference>
<dbReference type="GO" id="GO:0005524">
    <property type="term" value="F:ATP binding"/>
    <property type="evidence" value="ECO:0007669"/>
    <property type="project" value="UniProtKB-UniRule"/>
</dbReference>
<dbReference type="GO" id="GO:0004823">
    <property type="term" value="F:leucine-tRNA ligase activity"/>
    <property type="evidence" value="ECO:0007669"/>
    <property type="project" value="UniProtKB-UniRule"/>
</dbReference>
<dbReference type="GO" id="GO:0006429">
    <property type="term" value="P:leucyl-tRNA aminoacylation"/>
    <property type="evidence" value="ECO:0007669"/>
    <property type="project" value="UniProtKB-UniRule"/>
</dbReference>
<dbReference type="CDD" id="cd07958">
    <property type="entry name" value="Anticodon_Ia_Leu_BEm"/>
    <property type="match status" value="1"/>
</dbReference>
<dbReference type="FunFam" id="1.10.730.10:FF:000002">
    <property type="entry name" value="Leucine--tRNA ligase"/>
    <property type="match status" value="1"/>
</dbReference>
<dbReference type="FunFam" id="3.40.50.620:FF:000003">
    <property type="entry name" value="Leucine--tRNA ligase"/>
    <property type="match status" value="1"/>
</dbReference>
<dbReference type="FunFam" id="3.40.50.620:FF:000056">
    <property type="entry name" value="Leucine--tRNA ligase"/>
    <property type="match status" value="1"/>
</dbReference>
<dbReference type="Gene3D" id="3.10.20.590">
    <property type="match status" value="1"/>
</dbReference>
<dbReference type="Gene3D" id="3.40.50.620">
    <property type="entry name" value="HUPs"/>
    <property type="match status" value="2"/>
</dbReference>
<dbReference type="Gene3D" id="1.10.730.10">
    <property type="entry name" value="Isoleucyl-tRNA Synthetase, Domain 1"/>
    <property type="match status" value="1"/>
</dbReference>
<dbReference type="HAMAP" id="MF_00049_B">
    <property type="entry name" value="Leu_tRNA_synth_B"/>
    <property type="match status" value="1"/>
</dbReference>
<dbReference type="InterPro" id="IPR001412">
    <property type="entry name" value="aa-tRNA-synth_I_CS"/>
</dbReference>
<dbReference type="InterPro" id="IPR002302">
    <property type="entry name" value="Leu-tRNA-ligase"/>
</dbReference>
<dbReference type="InterPro" id="IPR025709">
    <property type="entry name" value="Leu_tRNA-synth_edit"/>
</dbReference>
<dbReference type="InterPro" id="IPR013155">
    <property type="entry name" value="M/V/L/I-tRNA-synth_anticd-bd"/>
</dbReference>
<dbReference type="InterPro" id="IPR015413">
    <property type="entry name" value="Methionyl/Leucyl_tRNA_Synth"/>
</dbReference>
<dbReference type="InterPro" id="IPR014729">
    <property type="entry name" value="Rossmann-like_a/b/a_fold"/>
</dbReference>
<dbReference type="InterPro" id="IPR009080">
    <property type="entry name" value="tRNAsynth_Ia_anticodon-bd"/>
</dbReference>
<dbReference type="InterPro" id="IPR009008">
    <property type="entry name" value="Val/Leu/Ile-tRNA-synth_edit"/>
</dbReference>
<dbReference type="NCBIfam" id="TIGR00396">
    <property type="entry name" value="leuS_bact"/>
    <property type="match status" value="1"/>
</dbReference>
<dbReference type="PANTHER" id="PTHR43740:SF2">
    <property type="entry name" value="LEUCINE--TRNA LIGASE, MITOCHONDRIAL"/>
    <property type="match status" value="1"/>
</dbReference>
<dbReference type="PANTHER" id="PTHR43740">
    <property type="entry name" value="LEUCYL-TRNA SYNTHETASE"/>
    <property type="match status" value="1"/>
</dbReference>
<dbReference type="Pfam" id="PF08264">
    <property type="entry name" value="Anticodon_1"/>
    <property type="match status" value="1"/>
</dbReference>
<dbReference type="Pfam" id="PF13603">
    <property type="entry name" value="tRNA-synt_1_2"/>
    <property type="match status" value="1"/>
</dbReference>
<dbReference type="Pfam" id="PF09334">
    <property type="entry name" value="tRNA-synt_1g"/>
    <property type="match status" value="2"/>
</dbReference>
<dbReference type="PRINTS" id="PR00985">
    <property type="entry name" value="TRNASYNTHLEU"/>
</dbReference>
<dbReference type="SUPFAM" id="SSF47323">
    <property type="entry name" value="Anticodon-binding domain of a subclass of class I aminoacyl-tRNA synthetases"/>
    <property type="match status" value="1"/>
</dbReference>
<dbReference type="SUPFAM" id="SSF52374">
    <property type="entry name" value="Nucleotidylyl transferase"/>
    <property type="match status" value="1"/>
</dbReference>
<dbReference type="SUPFAM" id="SSF50677">
    <property type="entry name" value="ValRS/IleRS/LeuRS editing domain"/>
    <property type="match status" value="1"/>
</dbReference>
<dbReference type="PROSITE" id="PS00178">
    <property type="entry name" value="AA_TRNA_LIGASE_I"/>
    <property type="match status" value="1"/>
</dbReference>
<sequence length="821" mass="94106">MAEKRKYEPLKIEKKWQEIWDKNEEFEPKDDLSLPKKYILSMFPYPSGRIHMGHVRNYSIGDALARSYRKSGYNVLHPIGFDSFGMPAENAAIKHKIHPKIWTYENIDYMKKELASLGFSFSKKRILATSDPLYTKWEQSFFIKMFEKGLVYRKNAIVNWCEYDQTVLANEQVEDGKCWRCGNDVVQKELPGYYFNITKYASELLDDLKLLEGKWPNQVITMQENWIGRSYGLEFKFSLDEASKETLGGKFDGFEVFTTRPDTIYGVSYTALAPEHPIVKALLESDKFDENKKAKIKAILNQSPRERQASDKDGEFLGIYVVHPLTNEKIPVWVANFILADYGSGAIMAVPAHDQRDFEFASKFNLPIKPVVKPLEGESEGSKAYSEYGVAINSELINGLSSEDAKSFIIEKFEKDGLGKRITNYKLRDWGISRQRYWGAPIPVVHCKCCGVVPEKEENLPIALPEDVEITGEGNPLDKHPTWKFTKCPKCGKDAIRETDTMDTFVESSWYFARFASDEKTWEQKALDEKSVNYWMNVDQYIGGIEHAILHLLYARFFQKVLRDLGYLRDDEPFENLLTQGMVLKDGKKMSKSKGNVVDPDDIINRYGADTARLFILFAAPPQKELEWNDSAVEGAFRFLNRLWEKSQTIKKIDKLPEIDHESLNKDEKFARLKIYEALKKSTEVFGDTFAFNTLIAACMEALNAINAQDNDDVNAEGFFIILNLLEPIVPHIANELSEELFGRKNFTKIAVKEEVFVKDSIALAVTVNGKKRAEFEVTASENESEILKQAKQNVAKWLEGKEILKEIYIKGKLVNFVIKG</sequence>
<gene>
    <name evidence="1" type="primary">leuS</name>
    <name type="ordered locus">Ccon26_11910</name>
    <name type="ORF">CCC13826_0074</name>
</gene>
<protein>
    <recommendedName>
        <fullName evidence="1">Leucine--tRNA ligase</fullName>
        <ecNumber evidence="1">6.1.1.4</ecNumber>
    </recommendedName>
    <alternativeName>
        <fullName evidence="1">Leucyl-tRNA synthetase</fullName>
        <shortName evidence="1">LeuRS</shortName>
    </alternativeName>
</protein>
<reference key="1">
    <citation type="submission" date="2007-10" db="EMBL/GenBank/DDBJ databases">
        <title>Genome sequence of Campylobacter concisus 13826 isolated from human feces.</title>
        <authorList>
            <person name="Fouts D.E."/>
            <person name="Mongodin E.F."/>
            <person name="Puiu D."/>
            <person name="Sebastian Y."/>
            <person name="Miller W.G."/>
            <person name="Mandrell R.E."/>
            <person name="On S."/>
            <person name="Nelson K.E."/>
        </authorList>
    </citation>
    <scope>NUCLEOTIDE SEQUENCE [LARGE SCALE GENOMIC DNA]</scope>
    <source>
        <strain>13826</strain>
    </source>
</reference>
<accession>A7ZE39</accession>